<protein>
    <recommendedName>
        <fullName>Aminodeoxychorismate synthase component 2</fullName>
        <shortName>ADC synthase</shortName>
        <shortName>ADCS</shortName>
        <ecNumber>2.6.1.85</ecNumber>
    </recommendedName>
    <alternativeName>
        <fullName>4-amino-4-deoxychorismate synthase component 2</fullName>
    </alternativeName>
    <alternativeName>
        <fullName>Aminodeoxychorismate synthase, glutamine amidotransferase component</fullName>
    </alternativeName>
</protein>
<dbReference type="EC" id="2.6.1.85"/>
<dbReference type="EMBL" id="M64859">
    <property type="protein sequence ID" value="AAA26799.1"/>
    <property type="molecule type" value="Genomic_DNA"/>
</dbReference>
<dbReference type="PIR" id="JN0577">
    <property type="entry name" value="JN0577"/>
</dbReference>
<dbReference type="SMR" id="P27627"/>
<dbReference type="MEROPS" id="C26.955"/>
<dbReference type="UniPathway" id="UPA00077">
    <property type="reaction ID" value="UER00149"/>
</dbReference>
<dbReference type="GO" id="GO:0005829">
    <property type="term" value="C:cytosol"/>
    <property type="evidence" value="ECO:0007669"/>
    <property type="project" value="TreeGrafter"/>
</dbReference>
<dbReference type="GO" id="GO:0046820">
    <property type="term" value="F:4-amino-4-deoxychorismate synthase activity"/>
    <property type="evidence" value="ECO:0000250"/>
    <property type="project" value="UniProtKB"/>
</dbReference>
<dbReference type="GO" id="GO:0004049">
    <property type="term" value="F:anthranilate synthase activity"/>
    <property type="evidence" value="ECO:0007669"/>
    <property type="project" value="TreeGrafter"/>
</dbReference>
<dbReference type="GO" id="GO:0046656">
    <property type="term" value="P:folic acid biosynthetic process"/>
    <property type="evidence" value="ECO:0007669"/>
    <property type="project" value="UniProtKB-KW"/>
</dbReference>
<dbReference type="GO" id="GO:0000162">
    <property type="term" value="P:L-tryptophan biosynthetic process"/>
    <property type="evidence" value="ECO:0007669"/>
    <property type="project" value="TreeGrafter"/>
</dbReference>
<dbReference type="GO" id="GO:0046654">
    <property type="term" value="P:tetrahydrofolate biosynthetic process"/>
    <property type="evidence" value="ECO:0000250"/>
    <property type="project" value="UniProtKB"/>
</dbReference>
<dbReference type="CDD" id="cd01743">
    <property type="entry name" value="GATase1_Anthranilate_Synthase"/>
    <property type="match status" value="1"/>
</dbReference>
<dbReference type="Gene3D" id="3.40.50.880">
    <property type="match status" value="1"/>
</dbReference>
<dbReference type="InterPro" id="IPR050472">
    <property type="entry name" value="Anth_synth/Amidotransfase"/>
</dbReference>
<dbReference type="InterPro" id="IPR029062">
    <property type="entry name" value="Class_I_gatase-like"/>
</dbReference>
<dbReference type="InterPro" id="IPR017926">
    <property type="entry name" value="GATASE"/>
</dbReference>
<dbReference type="InterPro" id="IPR006221">
    <property type="entry name" value="TrpG/PapA_dom"/>
</dbReference>
<dbReference type="NCBIfam" id="TIGR00566">
    <property type="entry name" value="trpG_papA"/>
    <property type="match status" value="1"/>
</dbReference>
<dbReference type="PANTHER" id="PTHR43418:SF4">
    <property type="entry name" value="MULTIFUNCTIONAL TRYPTOPHAN BIOSYNTHESIS PROTEIN"/>
    <property type="match status" value="1"/>
</dbReference>
<dbReference type="PANTHER" id="PTHR43418">
    <property type="entry name" value="MULTIFUNCTIONAL TRYPTOPHAN BIOSYNTHESIS PROTEIN-RELATED"/>
    <property type="match status" value="1"/>
</dbReference>
<dbReference type="Pfam" id="PF00117">
    <property type="entry name" value="GATase"/>
    <property type="match status" value="1"/>
</dbReference>
<dbReference type="PRINTS" id="PR00097">
    <property type="entry name" value="ANTSNTHASEII"/>
</dbReference>
<dbReference type="PRINTS" id="PR00096">
    <property type="entry name" value="GATASE"/>
</dbReference>
<dbReference type="SUPFAM" id="SSF52317">
    <property type="entry name" value="Class I glutamine amidotransferase-like"/>
    <property type="match status" value="1"/>
</dbReference>
<dbReference type="PROSITE" id="PS51273">
    <property type="entry name" value="GATASE_TYPE_1"/>
    <property type="match status" value="1"/>
</dbReference>
<reference key="1">
    <citation type="journal article" date="1993" name="Gene">
        <title>Organization of the genes encoding p-aminobenzoic acid synthetase from Streptomyces lividans 1326.</title>
        <authorList>
            <person name="Arhin F.F."/>
            <person name="Vining L.C."/>
        </authorList>
    </citation>
    <scope>NUCLEOTIDE SEQUENCE [GENOMIC DNA]</scope>
    <source>
        <strain>66 / 1326</strain>
    </source>
</reference>
<proteinExistence type="inferred from homology"/>
<organism>
    <name type="scientific">Streptomyces lividans</name>
    <dbReference type="NCBI Taxonomy" id="1916"/>
    <lineage>
        <taxon>Bacteria</taxon>
        <taxon>Bacillati</taxon>
        <taxon>Actinomycetota</taxon>
        <taxon>Actinomycetes</taxon>
        <taxon>Kitasatosporales</taxon>
        <taxon>Streptomycetaceae</taxon>
        <taxon>Streptomyces</taxon>
    </lineage>
</organism>
<feature type="chain" id="PRO_0000056853" description="Aminodeoxychorismate synthase component 2">
    <location>
        <begin position="1"/>
        <end position="192"/>
    </location>
</feature>
<feature type="domain" description="Glutamine amidotransferase type-1" evidence="2">
    <location>
        <begin position="3"/>
        <end position="192"/>
    </location>
</feature>
<feature type="active site" evidence="2">
    <location>
        <position position="83"/>
    </location>
</feature>
<feature type="active site" evidence="2">
    <location>
        <position position="170"/>
    </location>
</feature>
<feature type="active site" evidence="2">
    <location>
        <position position="172"/>
    </location>
</feature>
<keyword id="KW-0289">Folate biosynthesis</keyword>
<keyword id="KW-0315">Glutamine amidotransferase</keyword>
<keyword id="KW-0808">Transferase</keyword>
<accession>P27627</accession>
<sequence length="192" mass="20759">MTSVLMIDNCDSFTYNLVDQFSPHGTIVIVKRNHPFYDGEIEAIMALTSICITPGPCYPAEAALNSCSIIGHLAGRIPILGICLGQQALGQARGGLVIFAHGKLSNIEHNGIFAPLFNPPRALPAGRYHSLVVEPARIEVTGQCNQLEVVPQEIMAIRHRDLPVEGVQFHPESILSSNGAAILANLIHRPCH</sequence>
<comment type="function">
    <text evidence="1">Part of a heterodimeric complex that catalyzes the two-step biosynthesis of 4-amino-4-deoxychorismate (ADC), a precursor of p-aminobenzoate (PABA) and tetrahydrofolate. In the first step, a glutamine amidotransferase (PabA) generates ammonia as a substrate that, along with chorismate, is used in the second step, catalyzed by aminodeoxychorismate synthase (PabB) to produce ADC. PabA converts glutamine into glutamate only in the presence of stoichiometric amounts of PabB (By similarity).</text>
</comment>
<comment type="catalytic activity">
    <reaction>
        <text>chorismate + L-glutamine = 4-amino-4-deoxychorismate + L-glutamate</text>
        <dbReference type="Rhea" id="RHEA:11672"/>
        <dbReference type="ChEBI" id="CHEBI:29748"/>
        <dbReference type="ChEBI" id="CHEBI:29985"/>
        <dbReference type="ChEBI" id="CHEBI:58359"/>
        <dbReference type="ChEBI" id="CHEBI:58406"/>
        <dbReference type="EC" id="2.6.1.85"/>
    </reaction>
</comment>
<comment type="pathway">
    <text>Cofactor biosynthesis; tetrahydrofolate biosynthesis; 4-aminobenzoate from chorismate: step 1/2.</text>
</comment>
<comment type="subunit">
    <text evidence="1">Monomer. Heterodimer consisting of two non-identical subunits: a glutamine amidotransferase subunit (PabA) and a aminodeoxychorismate synthase subunit (PabB) (By similarity).</text>
</comment>
<evidence type="ECO:0000250" key="1"/>
<evidence type="ECO:0000255" key="2">
    <source>
        <dbReference type="PROSITE-ProRule" id="PRU00605"/>
    </source>
</evidence>
<name>PABA_STRLI</name>